<dbReference type="EMBL" id="AF121108">
    <property type="protein sequence ID" value="AAD30031.1"/>
    <property type="molecule type" value="mRNA"/>
</dbReference>
<dbReference type="PIR" id="A59043">
    <property type="entry name" value="A59043"/>
</dbReference>
<dbReference type="TCDB" id="8.B.36.1.3">
    <property type="family name" value="the contulakin lt (contulakin lt) family"/>
</dbReference>
<dbReference type="GlyConnect" id="111">
    <property type="glycosylation" value="1 O-Linked glycan (1 site)"/>
</dbReference>
<dbReference type="ConoServer" id="1263">
    <property type="toxin name" value="contulakin-G precursor"/>
</dbReference>
<dbReference type="GO" id="GO:0005576">
    <property type="term" value="C:extracellular region"/>
    <property type="evidence" value="ECO:0007669"/>
    <property type="project" value="UniProtKB-SubCell"/>
</dbReference>
<dbReference type="GO" id="GO:0090729">
    <property type="term" value="F:toxin activity"/>
    <property type="evidence" value="ECO:0007669"/>
    <property type="project" value="UniProtKB-KW"/>
</dbReference>
<evidence type="ECO:0000255" key="1"/>
<evidence type="ECO:0000256" key="2">
    <source>
        <dbReference type="SAM" id="MobiDB-lite"/>
    </source>
</evidence>
<evidence type="ECO:0000269" key="3">
    <source>
    </source>
</evidence>
<evidence type="ECO:0000305" key="4"/>
<name>CONG_CONGE</name>
<keyword id="KW-0165">Cleavage on pair of basic residues</keyword>
<keyword id="KW-0903">Direct protein sequencing</keyword>
<keyword id="KW-1213">G-protein coupled receptor impairing toxin</keyword>
<keyword id="KW-0325">Glycoprotein</keyword>
<keyword id="KW-0528">Neurotoxin</keyword>
<keyword id="KW-0582">Pharmaceutical</keyword>
<keyword id="KW-0873">Pyrrolidone carboxylic acid</keyword>
<keyword id="KW-0964">Secreted</keyword>
<keyword id="KW-0732">Signal</keyword>
<keyword id="KW-0800">Toxin</keyword>
<sequence>MQTAYWVMVMMMVWIAAPLSEGGKLNDVIRGLVPDDITPQLILGSLISRRQSEEGGSNATKKPYILRASDQVASGP</sequence>
<organism>
    <name type="scientific">Conus geographus</name>
    <name type="common">Geography cone</name>
    <name type="synonym">Nubecula geographus</name>
    <dbReference type="NCBI Taxonomy" id="6491"/>
    <lineage>
        <taxon>Eukaryota</taxon>
        <taxon>Metazoa</taxon>
        <taxon>Spiralia</taxon>
        <taxon>Lophotrochozoa</taxon>
        <taxon>Mollusca</taxon>
        <taxon>Gastropoda</taxon>
        <taxon>Caenogastropoda</taxon>
        <taxon>Neogastropoda</taxon>
        <taxon>Conoidea</taxon>
        <taxon>Conidae</taxon>
        <taxon>Conus</taxon>
        <taxon>Gastridium</taxon>
    </lineage>
</organism>
<protein>
    <recommendedName>
        <fullName>Contulakin-G</fullName>
    </recommendedName>
    <alternativeName>
        <fullName>CGX-1160</fullName>
    </alternativeName>
</protein>
<comment type="function">
    <text evidence="3">Acts as an agonist of neurotensin receptors. It binds to human neurotensin type 1 receptor (NTSR1), rat neurotensin types 1 and 2 receptors (NTSR1/NTSR2) and mouse neurotensin type 3 receptor (SORT1).</text>
</comment>
<comment type="subcellular location">
    <subcellularLocation>
        <location>Secreted</location>
    </subcellularLocation>
</comment>
<comment type="tissue specificity">
    <text>Expressed by the venom duct.</text>
</comment>
<comment type="PTM">
    <text>O-glycosylated. The glycosylation seems to enhance the affinity to the neurotensin receptors.</text>
</comment>
<comment type="pharmaceutical">
    <text>Is under phase II clinical trials under the name CGX-1160 by Cognetix Inc. It is efficacious in a wide range of preclinical pain models (acute, post-surgical, inflammatory, and neuropathic), and is particularly efficacious in models of chronic pain.</text>
</comment>
<comment type="miscellaneous">
    <text>The mature peptide does not contain cysteine residue.</text>
</comment>
<comment type="similarity">
    <text evidence="4">Belongs to the conotoxin C superfamily.</text>
</comment>
<accession>Q9XYR5</accession>
<reference key="1">
    <citation type="journal article" date="1999" name="J. Biol. Chem.">
        <title>Contulakin-G, an O-glycosylated invertebrate neurotensin.</title>
        <authorList>
            <person name="Craig A.G."/>
            <person name="Norberg T."/>
            <person name="Griffin D."/>
            <person name="Hoeger C."/>
            <person name="Akhtar M."/>
            <person name="Schmidt K."/>
            <person name="Low W."/>
            <person name="Dykert J."/>
            <person name="Richelson E."/>
            <person name="Navarro V."/>
            <person name="Mazella J."/>
            <person name="Watkins M."/>
            <person name="Hillyard D.R."/>
            <person name="Imperial J."/>
            <person name="Cruz L.J."/>
            <person name="Olivera B.M."/>
        </authorList>
    </citation>
    <scope>NUCLEOTIDE SEQUENCE [MRNA]</scope>
    <scope>PROTEIN SEQUENCE OF 51-66</scope>
    <scope>PYROGLUTAMATE FORMATION AT GLN-51</scope>
    <scope>FUNCTION</scope>
    <scope>TOXIN TARGET</scope>
    <source>
        <tissue>Venom</tissue>
    </source>
</reference>
<reference key="2">
    <citation type="journal article" date="2003" name="Pain">
        <title>Powerful antinociceptive effects of the cone snail venom-derived subtype-selective NMDA receptor antagonists conantokins G and T.</title>
        <authorList>
            <person name="Malmberg A.B."/>
            <person name="Gilbert H."/>
            <person name="McCabe R.T."/>
            <person name="Basbaum A.I."/>
        </authorList>
    </citation>
    <scope>PHARMACEUTICAL</scope>
</reference>
<feature type="signal peptide" evidence="1">
    <location>
        <begin position="1"/>
        <end position="22"/>
    </location>
</feature>
<feature type="propeptide" id="PRO_0000035083" evidence="3">
    <location>
        <begin position="23"/>
        <end position="50"/>
    </location>
</feature>
<feature type="peptide" id="PRO_0000035084" description="Contulakin-G">
    <location>
        <begin position="51"/>
        <end position="66"/>
    </location>
</feature>
<feature type="propeptide" id="PRO_0000035085">
    <location>
        <begin position="67"/>
        <end position="76"/>
    </location>
</feature>
<feature type="region of interest" description="Disordered" evidence="2">
    <location>
        <begin position="51"/>
        <end position="76"/>
    </location>
</feature>
<feature type="modified residue" description="Pyrrolidone carboxylic acid" evidence="3">
    <location>
        <position position="51"/>
    </location>
</feature>
<feature type="glycosylation site" id="CAR_000164" description="O-linked (GalNAc...) threonine">
    <location>
        <position position="60"/>
    </location>
</feature>
<proteinExistence type="evidence at protein level"/>